<protein>
    <recommendedName>
        <fullName evidence="1">Small ribosomal subunit protein uS13</fullName>
    </recommendedName>
    <alternativeName>
        <fullName evidence="3">30S ribosomal protein S13</fullName>
    </alternativeName>
</protein>
<keyword id="KW-1185">Reference proteome</keyword>
<keyword id="KW-0687">Ribonucleoprotein</keyword>
<keyword id="KW-0689">Ribosomal protein</keyword>
<keyword id="KW-0694">RNA-binding</keyword>
<keyword id="KW-0699">rRNA-binding</keyword>
<keyword id="KW-0820">tRNA-binding</keyword>
<dbReference type="EMBL" id="AL445565">
    <property type="protein sequence ID" value="CAC13736.1"/>
    <property type="molecule type" value="Genomic_DNA"/>
</dbReference>
<dbReference type="PIR" id="C90582">
    <property type="entry name" value="C90582"/>
</dbReference>
<dbReference type="RefSeq" id="WP_010925364.1">
    <property type="nucleotide sequence ID" value="NC_002771.1"/>
</dbReference>
<dbReference type="SMR" id="Q98Q06"/>
<dbReference type="STRING" id="272635.gene:17577170"/>
<dbReference type="KEGG" id="mpu:MYPU_5630"/>
<dbReference type="eggNOG" id="COG0099">
    <property type="taxonomic scope" value="Bacteria"/>
</dbReference>
<dbReference type="HOGENOM" id="CLU_103849_1_2_14"/>
<dbReference type="BioCyc" id="MPUL272635:G1GT6-576-MONOMER"/>
<dbReference type="Proteomes" id="UP000000528">
    <property type="component" value="Chromosome"/>
</dbReference>
<dbReference type="GO" id="GO:0005829">
    <property type="term" value="C:cytosol"/>
    <property type="evidence" value="ECO:0007669"/>
    <property type="project" value="TreeGrafter"/>
</dbReference>
<dbReference type="GO" id="GO:0015935">
    <property type="term" value="C:small ribosomal subunit"/>
    <property type="evidence" value="ECO:0007669"/>
    <property type="project" value="TreeGrafter"/>
</dbReference>
<dbReference type="GO" id="GO:0019843">
    <property type="term" value="F:rRNA binding"/>
    <property type="evidence" value="ECO:0007669"/>
    <property type="project" value="UniProtKB-UniRule"/>
</dbReference>
<dbReference type="GO" id="GO:0003735">
    <property type="term" value="F:structural constituent of ribosome"/>
    <property type="evidence" value="ECO:0007669"/>
    <property type="project" value="InterPro"/>
</dbReference>
<dbReference type="GO" id="GO:0000049">
    <property type="term" value="F:tRNA binding"/>
    <property type="evidence" value="ECO:0007669"/>
    <property type="project" value="UniProtKB-UniRule"/>
</dbReference>
<dbReference type="GO" id="GO:0006412">
    <property type="term" value="P:translation"/>
    <property type="evidence" value="ECO:0007669"/>
    <property type="project" value="UniProtKB-UniRule"/>
</dbReference>
<dbReference type="FunFam" id="1.10.8.50:FF:000001">
    <property type="entry name" value="30S ribosomal protein S13"/>
    <property type="match status" value="1"/>
</dbReference>
<dbReference type="FunFam" id="4.10.910.10:FF:000001">
    <property type="entry name" value="30S ribosomal protein S13"/>
    <property type="match status" value="1"/>
</dbReference>
<dbReference type="Gene3D" id="1.10.8.50">
    <property type="match status" value="1"/>
</dbReference>
<dbReference type="Gene3D" id="4.10.910.10">
    <property type="entry name" value="30s ribosomal protein s13, domain 2"/>
    <property type="match status" value="1"/>
</dbReference>
<dbReference type="HAMAP" id="MF_01315">
    <property type="entry name" value="Ribosomal_uS13"/>
    <property type="match status" value="1"/>
</dbReference>
<dbReference type="InterPro" id="IPR027437">
    <property type="entry name" value="Rbsml_uS13_C"/>
</dbReference>
<dbReference type="InterPro" id="IPR001892">
    <property type="entry name" value="Ribosomal_uS13"/>
</dbReference>
<dbReference type="InterPro" id="IPR010979">
    <property type="entry name" value="Ribosomal_uS13-like_H2TH"/>
</dbReference>
<dbReference type="InterPro" id="IPR019980">
    <property type="entry name" value="Ribosomal_uS13_bac-type"/>
</dbReference>
<dbReference type="InterPro" id="IPR018269">
    <property type="entry name" value="Ribosomal_uS13_CS"/>
</dbReference>
<dbReference type="NCBIfam" id="TIGR03631">
    <property type="entry name" value="uS13_bact"/>
    <property type="match status" value="1"/>
</dbReference>
<dbReference type="PANTHER" id="PTHR10871">
    <property type="entry name" value="30S RIBOSOMAL PROTEIN S13/40S RIBOSOMAL PROTEIN S18"/>
    <property type="match status" value="1"/>
</dbReference>
<dbReference type="PANTHER" id="PTHR10871:SF1">
    <property type="entry name" value="SMALL RIBOSOMAL SUBUNIT PROTEIN US13M"/>
    <property type="match status" value="1"/>
</dbReference>
<dbReference type="Pfam" id="PF00416">
    <property type="entry name" value="Ribosomal_S13"/>
    <property type="match status" value="1"/>
</dbReference>
<dbReference type="PIRSF" id="PIRSF002134">
    <property type="entry name" value="Ribosomal_S13"/>
    <property type="match status" value="1"/>
</dbReference>
<dbReference type="SUPFAM" id="SSF46946">
    <property type="entry name" value="S13-like H2TH domain"/>
    <property type="match status" value="1"/>
</dbReference>
<dbReference type="PROSITE" id="PS00646">
    <property type="entry name" value="RIBOSOMAL_S13_1"/>
    <property type="match status" value="1"/>
</dbReference>
<dbReference type="PROSITE" id="PS50159">
    <property type="entry name" value="RIBOSOMAL_S13_2"/>
    <property type="match status" value="1"/>
</dbReference>
<gene>
    <name evidence="1" type="primary">rpsM</name>
    <name type="ordered locus">MYPU_5630</name>
</gene>
<organism>
    <name type="scientific">Mycoplasmopsis pulmonis (strain UAB CTIP)</name>
    <name type="common">Mycoplasma pulmonis</name>
    <dbReference type="NCBI Taxonomy" id="272635"/>
    <lineage>
        <taxon>Bacteria</taxon>
        <taxon>Bacillati</taxon>
        <taxon>Mycoplasmatota</taxon>
        <taxon>Mycoplasmoidales</taxon>
        <taxon>Metamycoplasmataceae</taxon>
        <taxon>Mycoplasmopsis</taxon>
    </lineage>
</organism>
<feature type="chain" id="PRO_0000132111" description="Small ribosomal subunit protein uS13">
    <location>
        <begin position="1"/>
        <end position="132"/>
    </location>
</feature>
<feature type="region of interest" description="Disordered" evidence="2">
    <location>
        <begin position="106"/>
        <end position="132"/>
    </location>
</feature>
<feature type="compositionally biased region" description="Basic residues" evidence="2">
    <location>
        <begin position="116"/>
        <end position="132"/>
    </location>
</feature>
<proteinExistence type="inferred from homology"/>
<reference key="1">
    <citation type="journal article" date="2001" name="Nucleic Acids Res.">
        <title>The complete genome sequence of the murine respiratory pathogen Mycoplasma pulmonis.</title>
        <authorList>
            <person name="Chambaud I."/>
            <person name="Heilig R."/>
            <person name="Ferris S."/>
            <person name="Barbe V."/>
            <person name="Samson D."/>
            <person name="Galisson F."/>
            <person name="Moszer I."/>
            <person name="Dybvig K."/>
            <person name="Wroblewski H."/>
            <person name="Viari A."/>
            <person name="Rocha E.P.C."/>
            <person name="Blanchard A."/>
        </authorList>
    </citation>
    <scope>NUCLEOTIDE SEQUENCE [LARGE SCALE GENOMIC DNA]</scope>
    <source>
        <strain>UAB CTIP</strain>
    </source>
</reference>
<sequence length="132" mass="15002">MARILNIEIPSNKRVVISLTYILGIGKSLSKEIIVKANEKLAKAKEKTFTEDSRVKDLSEEQLQAIRDSAKTYLTEGDLRREVSLNIKRLMEIKCYRGIRHRKGLPVRGQVTQKNARTRKGPRKTVAGKKGK</sequence>
<comment type="function">
    <text evidence="1">Located at the top of the head of the 30S subunit, it contacts several helices of the 16S rRNA. In the 70S ribosome it contacts the 23S rRNA (bridge B1a) and protein L5 of the 50S subunit (bridge B1b), connecting the 2 subunits; these bridges are implicated in subunit movement. Contacts the tRNAs in the A and P-sites.</text>
</comment>
<comment type="subunit">
    <text evidence="1">Part of the 30S ribosomal subunit. Forms a loose heterodimer with protein S19. Forms two bridges to the 50S subunit in the 70S ribosome.</text>
</comment>
<comment type="similarity">
    <text evidence="1">Belongs to the universal ribosomal protein uS13 family.</text>
</comment>
<name>RS13_MYCPU</name>
<evidence type="ECO:0000255" key="1">
    <source>
        <dbReference type="HAMAP-Rule" id="MF_01315"/>
    </source>
</evidence>
<evidence type="ECO:0000256" key="2">
    <source>
        <dbReference type="SAM" id="MobiDB-lite"/>
    </source>
</evidence>
<evidence type="ECO:0000305" key="3"/>
<accession>Q98Q06</accession>